<geneLocation type="chloroplast"/>
<comment type="function">
    <text evidence="2">Photosystem II (PSII) is a light-driven water:plastoquinone oxidoreductase that uses light energy to abstract electrons from H(2)O, generating O(2) and a proton gradient subsequently used for ATP formation. It consists of a core antenna complex that captures photons, and an electron transfer chain that converts photonic excitation into a charge separation. The D1/D2 (PsbA/PsbD) reaction center heterodimer binds P680, the primary electron donor of PSII as well as several subsequent electron acceptors. D2 is needed for assembly of a stable PSII complex.</text>
</comment>
<comment type="catalytic activity">
    <reaction evidence="2">
        <text>2 a plastoquinone + 4 hnu + 2 H2O = 2 a plastoquinol + O2</text>
        <dbReference type="Rhea" id="RHEA:36359"/>
        <dbReference type="Rhea" id="RHEA-COMP:9561"/>
        <dbReference type="Rhea" id="RHEA-COMP:9562"/>
        <dbReference type="ChEBI" id="CHEBI:15377"/>
        <dbReference type="ChEBI" id="CHEBI:15379"/>
        <dbReference type="ChEBI" id="CHEBI:17757"/>
        <dbReference type="ChEBI" id="CHEBI:30212"/>
        <dbReference type="ChEBI" id="CHEBI:62192"/>
        <dbReference type="EC" id="1.10.3.9"/>
    </reaction>
</comment>
<comment type="cofactor">
    <text evidence="2">The D1/D2 heterodimer binds P680, chlorophylls that are the primary electron donor of PSII, and subsequent electron acceptors. It shares a non-heme iron and each subunit binds pheophytin, quinone, additional chlorophylls, carotenoids and lipids. There is also a Cl(-1) ion associated with D1 and D2, which is required for oxygen evolution. The PSII complex binds additional chlorophylls, carotenoids and specific lipids.</text>
</comment>
<comment type="subunit">
    <text evidence="2">PSII is composed of 1 copy each of membrane proteins PsbA, PsbB, PsbC, PsbD, PsbE, PsbF, PsbH, PsbI, PsbJ, PsbK, PsbL, PsbM, PsbT, PsbX, PsbY, PsbZ, Psb30/Ycf12, at least 3 peripheral proteins of the oxygen-evolving complex and a large number of cofactors. It forms dimeric complexes.</text>
</comment>
<comment type="subcellular location">
    <subcellularLocation>
        <location evidence="2">Plastid</location>
        <location evidence="2">Chloroplast thylakoid membrane</location>
        <topology evidence="2">Multi-pass membrane protein</topology>
    </subcellularLocation>
</comment>
<comment type="miscellaneous">
    <text evidence="2">2 of the reaction center chlorophylls (ChlD1 and ChlD2) are entirely coordinated by water.</text>
</comment>
<comment type="similarity">
    <text evidence="2">Belongs to the reaction center PufL/M/PsbA/D family.</text>
</comment>
<feature type="initiator methionine" description="Removed" evidence="1">
    <location>
        <position position="1"/>
    </location>
</feature>
<feature type="chain" id="PRO_0000226922" description="Photosystem II D2 protein">
    <location>
        <begin position="2"/>
        <end position="353"/>
    </location>
</feature>
<feature type="transmembrane region" description="Helical" evidence="2">
    <location>
        <begin position="41"/>
        <end position="61"/>
    </location>
</feature>
<feature type="transmembrane region" description="Helical" evidence="2">
    <location>
        <begin position="125"/>
        <end position="141"/>
    </location>
</feature>
<feature type="transmembrane region" description="Helical" evidence="2">
    <location>
        <begin position="153"/>
        <end position="166"/>
    </location>
</feature>
<feature type="transmembrane region" description="Helical" evidence="2">
    <location>
        <begin position="208"/>
        <end position="228"/>
    </location>
</feature>
<feature type="transmembrane region" description="Helical" evidence="2">
    <location>
        <begin position="279"/>
        <end position="295"/>
    </location>
</feature>
<feature type="binding site" description="axial binding residue" evidence="2">
    <location>
        <position position="118"/>
    </location>
    <ligand>
        <name>chlorophyll a</name>
        <dbReference type="ChEBI" id="CHEBI:58416"/>
        <label>ChlzD2</label>
    </ligand>
    <ligandPart>
        <name>Mg</name>
        <dbReference type="ChEBI" id="CHEBI:25107"/>
    </ligandPart>
</feature>
<feature type="binding site" evidence="2">
    <location>
        <position position="130"/>
    </location>
    <ligand>
        <name>pheophytin a</name>
        <dbReference type="ChEBI" id="CHEBI:136840"/>
        <label>D2</label>
    </ligand>
</feature>
<feature type="binding site" evidence="2">
    <location>
        <position position="143"/>
    </location>
    <ligand>
        <name>pheophytin a</name>
        <dbReference type="ChEBI" id="CHEBI:136840"/>
        <label>D2</label>
    </ligand>
</feature>
<feature type="binding site" description="axial binding residue" evidence="2">
    <location>
        <position position="198"/>
    </location>
    <ligand>
        <name>chlorophyll a</name>
        <dbReference type="ChEBI" id="CHEBI:58416"/>
        <label>PD2</label>
    </ligand>
    <ligandPart>
        <name>Mg</name>
        <dbReference type="ChEBI" id="CHEBI:25107"/>
    </ligandPart>
</feature>
<feature type="binding site" evidence="2">
    <location>
        <position position="215"/>
    </location>
    <ligand>
        <name>a plastoquinone</name>
        <dbReference type="ChEBI" id="CHEBI:17757"/>
        <label>Q(A)</label>
    </ligand>
</feature>
<feature type="binding site" evidence="2">
    <location>
        <position position="215"/>
    </location>
    <ligand>
        <name>Fe cation</name>
        <dbReference type="ChEBI" id="CHEBI:24875"/>
        <note>ligand shared with heterodimeric partner</note>
    </ligand>
</feature>
<feature type="binding site" evidence="2">
    <location>
        <position position="262"/>
    </location>
    <ligand>
        <name>a plastoquinone</name>
        <dbReference type="ChEBI" id="CHEBI:17757"/>
        <label>Q(A)</label>
    </ligand>
</feature>
<feature type="binding site" evidence="2">
    <location>
        <position position="269"/>
    </location>
    <ligand>
        <name>Fe cation</name>
        <dbReference type="ChEBI" id="CHEBI:24875"/>
        <note>ligand shared with heterodimeric partner</note>
    </ligand>
</feature>
<feature type="modified residue" description="N-acetylthreonine" evidence="1">
    <location>
        <position position="2"/>
    </location>
</feature>
<feature type="modified residue" description="Phosphothreonine" evidence="1">
    <location>
        <position position="2"/>
    </location>
</feature>
<proteinExistence type="inferred from homology"/>
<keyword id="KW-0007">Acetylation</keyword>
<keyword id="KW-0148">Chlorophyll</keyword>
<keyword id="KW-0150">Chloroplast</keyword>
<keyword id="KW-0157">Chromophore</keyword>
<keyword id="KW-0249">Electron transport</keyword>
<keyword id="KW-0408">Iron</keyword>
<keyword id="KW-0460">Magnesium</keyword>
<keyword id="KW-0472">Membrane</keyword>
<keyword id="KW-0479">Metal-binding</keyword>
<keyword id="KW-0560">Oxidoreductase</keyword>
<keyword id="KW-0597">Phosphoprotein</keyword>
<keyword id="KW-0602">Photosynthesis</keyword>
<keyword id="KW-0604">Photosystem II</keyword>
<keyword id="KW-0934">Plastid</keyword>
<keyword id="KW-0793">Thylakoid</keyword>
<keyword id="KW-0812">Transmembrane</keyword>
<keyword id="KW-1133">Transmembrane helix</keyword>
<keyword id="KW-0813">Transport</keyword>
<name>PSBD_SACHY</name>
<gene>
    <name evidence="2" type="primary">psbD</name>
    <name type="ordered locus">PS090</name>
</gene>
<dbReference type="EC" id="1.10.3.9" evidence="2"/>
<dbReference type="EMBL" id="AE009947">
    <property type="protein sequence ID" value="AAT44681.1"/>
    <property type="molecule type" value="Genomic_DNA"/>
</dbReference>
<dbReference type="SMR" id="Q6L3B1"/>
<dbReference type="GO" id="GO:0009535">
    <property type="term" value="C:chloroplast thylakoid membrane"/>
    <property type="evidence" value="ECO:0007669"/>
    <property type="project" value="UniProtKB-SubCell"/>
</dbReference>
<dbReference type="GO" id="GO:0009523">
    <property type="term" value="C:photosystem II"/>
    <property type="evidence" value="ECO:0007669"/>
    <property type="project" value="UniProtKB-KW"/>
</dbReference>
<dbReference type="GO" id="GO:0016168">
    <property type="term" value="F:chlorophyll binding"/>
    <property type="evidence" value="ECO:0007669"/>
    <property type="project" value="UniProtKB-UniRule"/>
</dbReference>
<dbReference type="GO" id="GO:0045156">
    <property type="term" value="F:electron transporter, transferring electrons within the cyclic electron transport pathway of photosynthesis activity"/>
    <property type="evidence" value="ECO:0007669"/>
    <property type="project" value="InterPro"/>
</dbReference>
<dbReference type="GO" id="GO:0005506">
    <property type="term" value="F:iron ion binding"/>
    <property type="evidence" value="ECO:0007669"/>
    <property type="project" value="UniProtKB-UniRule"/>
</dbReference>
<dbReference type="GO" id="GO:0010242">
    <property type="term" value="F:oxygen evolving activity"/>
    <property type="evidence" value="ECO:0007669"/>
    <property type="project" value="UniProtKB-EC"/>
</dbReference>
<dbReference type="GO" id="GO:0009772">
    <property type="term" value="P:photosynthetic electron transport in photosystem II"/>
    <property type="evidence" value="ECO:0007669"/>
    <property type="project" value="InterPro"/>
</dbReference>
<dbReference type="CDD" id="cd09288">
    <property type="entry name" value="Photosystem-II_D2"/>
    <property type="match status" value="1"/>
</dbReference>
<dbReference type="FunFam" id="1.20.85.10:FF:000001">
    <property type="entry name" value="photosystem II D2 protein-like"/>
    <property type="match status" value="1"/>
</dbReference>
<dbReference type="Gene3D" id="1.20.85.10">
    <property type="entry name" value="Photosystem II protein D1-like"/>
    <property type="match status" value="1"/>
</dbReference>
<dbReference type="HAMAP" id="MF_01383">
    <property type="entry name" value="PSII_PsbD_D2"/>
    <property type="match status" value="1"/>
</dbReference>
<dbReference type="InterPro" id="IPR055266">
    <property type="entry name" value="D1/D2"/>
</dbReference>
<dbReference type="InterPro" id="IPR036854">
    <property type="entry name" value="Photo_II_D1/D2_sf"/>
</dbReference>
<dbReference type="InterPro" id="IPR000484">
    <property type="entry name" value="Photo_RC_L/M"/>
</dbReference>
<dbReference type="InterPro" id="IPR055265">
    <property type="entry name" value="Photo_RC_L/M_CS"/>
</dbReference>
<dbReference type="InterPro" id="IPR005868">
    <property type="entry name" value="PSII_PsbD/D2"/>
</dbReference>
<dbReference type="NCBIfam" id="TIGR01152">
    <property type="entry name" value="psbD"/>
    <property type="match status" value="1"/>
</dbReference>
<dbReference type="PANTHER" id="PTHR33149:SF12">
    <property type="entry name" value="PHOTOSYSTEM II D2 PROTEIN"/>
    <property type="match status" value="1"/>
</dbReference>
<dbReference type="PANTHER" id="PTHR33149">
    <property type="entry name" value="PHOTOSYSTEM II PROTEIN D1"/>
    <property type="match status" value="1"/>
</dbReference>
<dbReference type="Pfam" id="PF00124">
    <property type="entry name" value="Photo_RC"/>
    <property type="match status" value="1"/>
</dbReference>
<dbReference type="PRINTS" id="PR00256">
    <property type="entry name" value="REACTNCENTRE"/>
</dbReference>
<dbReference type="SUPFAM" id="SSF81483">
    <property type="entry name" value="Bacterial photosystem II reaction centre, L and M subunits"/>
    <property type="match status" value="1"/>
</dbReference>
<dbReference type="PROSITE" id="PS00244">
    <property type="entry name" value="REACTION_CENTER"/>
    <property type="match status" value="1"/>
</dbReference>
<organism>
    <name type="scientific">Saccharum hybrid</name>
    <name type="common">Sugarcane</name>
    <dbReference type="NCBI Taxonomy" id="15819"/>
    <lineage>
        <taxon>Eukaryota</taxon>
        <taxon>Viridiplantae</taxon>
        <taxon>Streptophyta</taxon>
        <taxon>Embryophyta</taxon>
        <taxon>Tracheophyta</taxon>
        <taxon>Spermatophyta</taxon>
        <taxon>Magnoliopsida</taxon>
        <taxon>Liliopsida</taxon>
        <taxon>Poales</taxon>
        <taxon>Poaceae</taxon>
        <taxon>PACMAD clade</taxon>
        <taxon>Panicoideae</taxon>
        <taxon>Andropogonodae</taxon>
        <taxon>Andropogoneae</taxon>
        <taxon>Saccharinae</taxon>
        <taxon>Saccharum</taxon>
    </lineage>
</organism>
<reference key="1">
    <citation type="journal article" date="2004" name="Curr. Genet.">
        <title>Structural features and transcript-editing analysis of sugarcane (Saccharum officinarum L.) chloroplast genome.</title>
        <authorList>
            <person name="Calsa T. Jr."/>
            <person name="Carraro D.M."/>
            <person name="Benatti M.R."/>
            <person name="Barbosa A.C."/>
            <person name="Kitajima J.P."/>
            <person name="Carrer H."/>
        </authorList>
    </citation>
    <scope>NUCLEOTIDE SEQUENCE [LARGE SCALE GENOMIC DNA]</scope>
    <source>
        <strain>cv. SP-80-3280</strain>
    </source>
</reference>
<accession>Q6L3B1</accession>
<sequence>MTIAVGRVTKEENDLFDIMDDWLRRDRFVFVGWSGLLLFPCAYFALGGWFTGTTFVTSWYTHGLASSYLEGCNFLTAAVSTPANSLAHSLLLLWGPEAQGDFTRWCQLGGLWTFVALHGAFALIGFMLRQFELARSVQLRPYNAISFSGPIAVFVSVFLIYPLGQSGWFFAPSFGVAAIFRFILFFQGFHNWTLNPFHMMGVAGVLGAALLCAIHGATVENTLFEDGDGANTFRAFNPTQAEETYSMVTANRFWSQIFGVAFSNKRWLHFFMLFVPVTGLWMSAIGVVGLALNLRAYDFVSQEIRAAEDPEFETFYTKNILLNEGIRAWMAAQDQPHENLIFPEEVLPRGNAL</sequence>
<evidence type="ECO:0000250" key="1">
    <source>
        <dbReference type="UniProtKB" id="P56761"/>
    </source>
</evidence>
<evidence type="ECO:0000255" key="2">
    <source>
        <dbReference type="HAMAP-Rule" id="MF_01383"/>
    </source>
</evidence>
<protein>
    <recommendedName>
        <fullName evidence="2">Photosystem II D2 protein</fullName>
        <shortName evidence="2">PSII D2 protein</shortName>
        <ecNumber evidence="2">1.10.3.9</ecNumber>
    </recommendedName>
    <alternativeName>
        <fullName evidence="2">Photosystem Q(A) protein</fullName>
    </alternativeName>
</protein>